<accession>C3LWD9</accession>
<organism>
    <name type="scientific">Vibrio cholerae serotype O1 (strain M66-2)</name>
    <dbReference type="NCBI Taxonomy" id="579112"/>
    <lineage>
        <taxon>Bacteria</taxon>
        <taxon>Pseudomonadati</taxon>
        <taxon>Pseudomonadota</taxon>
        <taxon>Gammaproteobacteria</taxon>
        <taxon>Vibrionales</taxon>
        <taxon>Vibrionaceae</taxon>
        <taxon>Vibrio</taxon>
    </lineage>
</organism>
<evidence type="ECO:0000255" key="1">
    <source>
        <dbReference type="HAMAP-Rule" id="MF_01030"/>
    </source>
</evidence>
<feature type="chain" id="PRO_1000149393" description="Probable D-serine dehydratase">
    <location>
        <begin position="1"/>
        <end position="441"/>
    </location>
</feature>
<feature type="modified residue" description="N6-(pyridoxal phosphate)lysine" evidence="1">
    <location>
        <position position="118"/>
    </location>
</feature>
<comment type="catalytic activity">
    <reaction evidence="1">
        <text>D-serine = pyruvate + NH4(+)</text>
        <dbReference type="Rhea" id="RHEA:13977"/>
        <dbReference type="ChEBI" id="CHEBI:15361"/>
        <dbReference type="ChEBI" id="CHEBI:28938"/>
        <dbReference type="ChEBI" id="CHEBI:35247"/>
        <dbReference type="EC" id="4.3.1.18"/>
    </reaction>
</comment>
<comment type="cofactor">
    <cofactor evidence="1">
        <name>pyridoxal 5'-phosphate</name>
        <dbReference type="ChEBI" id="CHEBI:597326"/>
    </cofactor>
</comment>
<comment type="similarity">
    <text evidence="1">Belongs to the serine/threonine dehydratase family. DsdA subfamily.</text>
</comment>
<protein>
    <recommendedName>
        <fullName evidence="1">Probable D-serine dehydratase</fullName>
        <ecNumber evidence="1">4.3.1.18</ecNumber>
    </recommendedName>
    <alternativeName>
        <fullName evidence="1">D-serine deaminase</fullName>
        <shortName evidence="1">DSD</shortName>
    </alternativeName>
</protein>
<keyword id="KW-0456">Lyase</keyword>
<keyword id="KW-0663">Pyridoxal phosphate</keyword>
<name>SDHD_VIBCM</name>
<dbReference type="EC" id="4.3.1.18" evidence="1"/>
<dbReference type="EMBL" id="CP001234">
    <property type="protein sequence ID" value="ACP07794.1"/>
    <property type="molecule type" value="Genomic_DNA"/>
</dbReference>
<dbReference type="RefSeq" id="WP_001885353.1">
    <property type="nucleotide sequence ID" value="NC_012580.1"/>
</dbReference>
<dbReference type="SMR" id="C3LWD9"/>
<dbReference type="KEGG" id="vcm:VCM66_A0834"/>
<dbReference type="HOGENOM" id="CLU_035707_0_0_6"/>
<dbReference type="Proteomes" id="UP000001217">
    <property type="component" value="Chromosome II"/>
</dbReference>
<dbReference type="GO" id="GO:0008721">
    <property type="term" value="F:D-serine ammonia-lyase activity"/>
    <property type="evidence" value="ECO:0007669"/>
    <property type="project" value="UniProtKB-EC"/>
</dbReference>
<dbReference type="GO" id="GO:0016836">
    <property type="term" value="F:hydro-lyase activity"/>
    <property type="evidence" value="ECO:0007669"/>
    <property type="project" value="UniProtKB-UniRule"/>
</dbReference>
<dbReference type="GO" id="GO:0030170">
    <property type="term" value="F:pyridoxal phosphate binding"/>
    <property type="evidence" value="ECO:0007669"/>
    <property type="project" value="InterPro"/>
</dbReference>
<dbReference type="GO" id="GO:0036088">
    <property type="term" value="P:D-serine catabolic process"/>
    <property type="evidence" value="ECO:0007669"/>
    <property type="project" value="TreeGrafter"/>
</dbReference>
<dbReference type="GO" id="GO:0009097">
    <property type="term" value="P:isoleucine biosynthetic process"/>
    <property type="evidence" value="ECO:0007669"/>
    <property type="project" value="TreeGrafter"/>
</dbReference>
<dbReference type="CDD" id="cd06447">
    <property type="entry name" value="D-Ser-dehyd"/>
    <property type="match status" value="1"/>
</dbReference>
<dbReference type="FunFam" id="3.40.50.1100:FF:000018">
    <property type="entry name" value="D-serine dehydratase"/>
    <property type="match status" value="1"/>
</dbReference>
<dbReference type="Gene3D" id="3.40.50.1100">
    <property type="match status" value="2"/>
</dbReference>
<dbReference type="HAMAP" id="MF_01030">
    <property type="entry name" value="D_Ser_dehydrat"/>
    <property type="match status" value="1"/>
</dbReference>
<dbReference type="InterPro" id="IPR011780">
    <property type="entry name" value="D_Ser_am_lyase"/>
</dbReference>
<dbReference type="InterPro" id="IPR050147">
    <property type="entry name" value="Ser/Thr_Dehydratase"/>
</dbReference>
<dbReference type="InterPro" id="IPR000634">
    <property type="entry name" value="Ser/Thr_deHydtase_PyrdxlP-BS"/>
</dbReference>
<dbReference type="InterPro" id="IPR001926">
    <property type="entry name" value="TrpB-like_PALP"/>
</dbReference>
<dbReference type="InterPro" id="IPR036052">
    <property type="entry name" value="TrpB-like_PALP_sf"/>
</dbReference>
<dbReference type="NCBIfam" id="TIGR02035">
    <property type="entry name" value="D_Ser_am_lyase"/>
    <property type="match status" value="1"/>
</dbReference>
<dbReference type="NCBIfam" id="NF002823">
    <property type="entry name" value="PRK02991.1"/>
    <property type="match status" value="1"/>
</dbReference>
<dbReference type="PANTHER" id="PTHR48078:SF9">
    <property type="entry name" value="D-SERINE DEHYDRATASE"/>
    <property type="match status" value="1"/>
</dbReference>
<dbReference type="PANTHER" id="PTHR48078">
    <property type="entry name" value="THREONINE DEHYDRATASE, MITOCHONDRIAL-RELATED"/>
    <property type="match status" value="1"/>
</dbReference>
<dbReference type="Pfam" id="PF00291">
    <property type="entry name" value="PALP"/>
    <property type="match status" value="1"/>
</dbReference>
<dbReference type="SUPFAM" id="SSF53686">
    <property type="entry name" value="Tryptophan synthase beta subunit-like PLP-dependent enzymes"/>
    <property type="match status" value="1"/>
</dbReference>
<dbReference type="PROSITE" id="PS00165">
    <property type="entry name" value="DEHYDRATASE_SER_THR"/>
    <property type="match status" value="1"/>
</dbReference>
<gene>
    <name evidence="1" type="primary">dsdA</name>
    <name type="ordered locus">VCM66_A0834</name>
</gene>
<sequence length="441" mass="48333">MMTINIEQLTEQYPLVKELIELKEVSWFNPSITRLEEGLSYVGLGSEDIQDASQRLKRFAPYLAKAFPETAKTNGIIESEVVPISEMQSVLEREYDTPIQGRLLLKKDSHLPISGSIKARGGIYEVLTHAEKLAIEAGLLTESDDYSKLLNEEFRDFFKRFSIAVGSTGNLGMSIGIMSAKLGFSVSVHMSADARAWKKNRLRALGVNVIEYAQDYGVAVAQGRKEAENDPTCFFIDDENSQTLFLGYSVAGERLKKQFDEKGIVVDAQHPLFVYLPCGVGGGPGGVAFGLKMAFGDNVHCIFAEPTHSPCMMLGVHTGLHDAISVQDIGIDNITAADGLAVGRASGFVGRAMERLLDGYLTISDERMYRLLGQLNEAENIQLEPSALAGMIGPIVVTKSVEYRARMQFDDTVMGNATHLVWATGGGMVPAEEMDSYLKNR</sequence>
<reference key="1">
    <citation type="journal article" date="2008" name="PLoS ONE">
        <title>A recalibrated molecular clock and independent origins for the cholera pandemic clones.</title>
        <authorList>
            <person name="Feng L."/>
            <person name="Reeves P.R."/>
            <person name="Lan R."/>
            <person name="Ren Y."/>
            <person name="Gao C."/>
            <person name="Zhou Z."/>
            <person name="Ren Y."/>
            <person name="Cheng J."/>
            <person name="Wang W."/>
            <person name="Wang J."/>
            <person name="Qian W."/>
            <person name="Li D."/>
            <person name="Wang L."/>
        </authorList>
    </citation>
    <scope>NUCLEOTIDE SEQUENCE [LARGE SCALE GENOMIC DNA]</scope>
    <source>
        <strain>M66-2</strain>
    </source>
</reference>
<proteinExistence type="inferred from homology"/>